<comment type="similarity">
    <text evidence="1">Belongs to the UPF0145 family.</text>
</comment>
<dbReference type="EMBL" id="CP000413">
    <property type="protein sequence ID" value="ABJ60472.1"/>
    <property type="molecule type" value="Genomic_DNA"/>
</dbReference>
<dbReference type="RefSeq" id="WP_003647201.1">
    <property type="nucleotide sequence ID" value="NZ_WBMG01000002.1"/>
</dbReference>
<dbReference type="SMR" id="Q043A0"/>
<dbReference type="GeneID" id="29639201"/>
<dbReference type="KEGG" id="lga:LGAS_1099"/>
<dbReference type="HOGENOM" id="CLU_117144_1_2_9"/>
<dbReference type="BioCyc" id="LGAS324831:G1G6Y-1097-MONOMER"/>
<dbReference type="Proteomes" id="UP000000664">
    <property type="component" value="Chromosome"/>
</dbReference>
<dbReference type="Gene3D" id="3.30.110.70">
    <property type="entry name" value="Hypothetical protein apc22750. Chain B"/>
    <property type="match status" value="1"/>
</dbReference>
<dbReference type="HAMAP" id="MF_00338">
    <property type="entry name" value="UPF0145"/>
    <property type="match status" value="1"/>
</dbReference>
<dbReference type="InterPro" id="IPR035439">
    <property type="entry name" value="UPF0145_dom_sf"/>
</dbReference>
<dbReference type="InterPro" id="IPR002765">
    <property type="entry name" value="UPF0145_YbjQ-like"/>
</dbReference>
<dbReference type="PANTHER" id="PTHR34068:SF2">
    <property type="entry name" value="UPF0145 PROTEIN SCO3412"/>
    <property type="match status" value="1"/>
</dbReference>
<dbReference type="PANTHER" id="PTHR34068">
    <property type="entry name" value="UPF0145 PROTEIN YBJQ"/>
    <property type="match status" value="1"/>
</dbReference>
<dbReference type="Pfam" id="PF01906">
    <property type="entry name" value="YbjQ_1"/>
    <property type="match status" value="1"/>
</dbReference>
<dbReference type="SUPFAM" id="SSF117782">
    <property type="entry name" value="YbjQ-like"/>
    <property type="match status" value="1"/>
</dbReference>
<protein>
    <recommendedName>
        <fullName evidence="1">UPF0145 protein LGAS_1099</fullName>
    </recommendedName>
</protein>
<organism>
    <name type="scientific">Lactobacillus gasseri (strain ATCC 33323 / DSM 20243 / BCRC 14619 / CIP 102991 / JCM 1131 / KCTC 3163 / NCIMB 11718 / NCTC 13722 / AM63)</name>
    <dbReference type="NCBI Taxonomy" id="324831"/>
    <lineage>
        <taxon>Bacteria</taxon>
        <taxon>Bacillati</taxon>
        <taxon>Bacillota</taxon>
        <taxon>Bacilli</taxon>
        <taxon>Lactobacillales</taxon>
        <taxon>Lactobacillaceae</taxon>
        <taxon>Lactobacillus</taxon>
    </lineage>
</organism>
<name>Y1099_LACGA</name>
<evidence type="ECO:0000255" key="1">
    <source>
        <dbReference type="HAMAP-Rule" id="MF_00338"/>
    </source>
</evidence>
<feature type="chain" id="PRO_1000013006" description="UPF0145 protein LGAS_1099">
    <location>
        <begin position="1"/>
        <end position="108"/>
    </location>
</feature>
<gene>
    <name type="ordered locus">LGAS_1099</name>
</gene>
<reference key="1">
    <citation type="journal article" date="2006" name="Proc. Natl. Acad. Sci. U.S.A.">
        <title>Comparative genomics of the lactic acid bacteria.</title>
        <authorList>
            <person name="Makarova K.S."/>
            <person name="Slesarev A."/>
            <person name="Wolf Y.I."/>
            <person name="Sorokin A."/>
            <person name="Mirkin B."/>
            <person name="Koonin E.V."/>
            <person name="Pavlov A."/>
            <person name="Pavlova N."/>
            <person name="Karamychev V."/>
            <person name="Polouchine N."/>
            <person name="Shakhova V."/>
            <person name="Grigoriev I."/>
            <person name="Lou Y."/>
            <person name="Rohksar D."/>
            <person name="Lucas S."/>
            <person name="Huang K."/>
            <person name="Goodstein D.M."/>
            <person name="Hawkins T."/>
            <person name="Plengvidhya V."/>
            <person name="Welker D."/>
            <person name="Hughes J."/>
            <person name="Goh Y."/>
            <person name="Benson A."/>
            <person name="Baldwin K."/>
            <person name="Lee J.-H."/>
            <person name="Diaz-Muniz I."/>
            <person name="Dosti B."/>
            <person name="Smeianov V."/>
            <person name="Wechter W."/>
            <person name="Barabote R."/>
            <person name="Lorca G."/>
            <person name="Altermann E."/>
            <person name="Barrangou R."/>
            <person name="Ganesan B."/>
            <person name="Xie Y."/>
            <person name="Rawsthorne H."/>
            <person name="Tamir D."/>
            <person name="Parker C."/>
            <person name="Breidt F."/>
            <person name="Broadbent J.R."/>
            <person name="Hutkins R."/>
            <person name="O'Sullivan D."/>
            <person name="Steele J."/>
            <person name="Unlu G."/>
            <person name="Saier M.H. Jr."/>
            <person name="Klaenhammer T."/>
            <person name="Richardson P."/>
            <person name="Kozyavkin S."/>
            <person name="Weimer B.C."/>
            <person name="Mills D.A."/>
        </authorList>
    </citation>
    <scope>NUCLEOTIDE SEQUENCE [LARGE SCALE GENOMIC DNA]</scope>
    <source>
        <strain>ATCC 33323 / DSM 20243 / BCRC 14619 / CIP 102991 / JCM 1131 / KCTC 3163 / NCIMB 11718 / NCTC 13722 / AM63</strain>
    </source>
</reference>
<proteinExistence type="inferred from homology"/>
<sequence length="108" mass="11551">MTDQLLVTTTENIPNQKYEIIGEVFGVTTQSKNALRDLGAGLKSIVGGEIKAYTSMLTESRDQAINRLCENAANLGADAVVMMRFDSGSIAGDMQSVVAYGTAVKFID</sequence>
<accession>Q043A0</accession>